<accession>A0A1V0QSG9</accession>
<accession>A0A7C9F3I7</accession>
<accession>A0A803Q7K4</accession>
<keyword id="KW-0150">Chloroplast</keyword>
<keyword id="KW-0460">Magnesium</keyword>
<keyword id="KW-0472">Membrane</keyword>
<keyword id="KW-0479">Metal-binding</keyword>
<keyword id="KW-0934">Plastid</keyword>
<keyword id="KW-1185">Reference proteome</keyword>
<keyword id="KW-0793">Thylakoid</keyword>
<keyword id="KW-0809">Transit peptide</keyword>
<gene>
    <name evidence="6" type="primary">GPPS.ssu1</name>
    <name evidence="7" type="synonym">GGR</name>
</gene>
<reference key="1">
    <citation type="journal article" date="2017" name="PLoS ONE">
        <title>Terpene synthases from Cannabis sativa.</title>
        <authorList>
            <person name="Booth J.K."/>
            <person name="Page J.E."/>
            <person name="Bohlmann J."/>
        </authorList>
    </citation>
    <scope>NUCLEOTIDE SEQUENCE [MRNA]</scope>
    <scope>TISSUE SPECIFICITY</scope>
    <source>
        <strain>cv. Finola</strain>
        <strain>cv. Purple Kush TPS13</strain>
    </source>
</reference>
<reference key="2">
    <citation type="submission" date="2020-03" db="EMBL/GenBank/DDBJ databases">
        <title>Sequence and annotation of 42 cannabis genomes reveals extensive copy number variation in cannabinoid synthesis and pathogen resistance genes.</title>
        <authorList>
            <person name="Mckernan K.J."/>
            <person name="Helbert Y."/>
            <person name="Kane L.T."/>
            <person name="Ebling H."/>
            <person name="Zhang L."/>
            <person name="Liu B."/>
            <person name="Eaton Z."/>
            <person name="Mclaughlin S."/>
            <person name="Kingan S."/>
            <person name="Baybayan P."/>
            <person name="Concepcion G."/>
            <person name="Jordan M."/>
            <person name="Riva A."/>
            <person name="Barbazuk W."/>
            <person name="Harkins T."/>
        </authorList>
    </citation>
    <scope>NUCLEOTIDE SEQUENCE [LARGE SCALE GENOMIC DNA]</scope>
    <source>
        <strain>cv. Jamaican Lion 4</strain>
        <tissue>Leaf</tissue>
    </source>
</reference>
<reference key="3">
    <citation type="submission" date="2019-09" db="EMBL/GenBank/DDBJ databases">
        <title>De novo assembly and annotation of transcriptomes from two cultivars of Cannabis sativa with different cannabinoid profiles.</title>
        <authorList>
            <person name="McGarvey P."/>
        </authorList>
    </citation>
    <scope>NUCLEOTIDE SEQUENCE [LARGE SCALE MRNA]</scope>
    <source>
        <strain>cv. Hetech2</strain>
        <strain>cv. Lali</strain>
        <tissue>Flower bud</tissue>
    </source>
</reference>
<protein>
    <recommendedName>
        <fullName evidence="6">Heterodimeric geranylgeranyl pyrophosphate synthase small subunit 1, chloroplastic</fullName>
        <shortName evidence="6">CsGPPS.ssu1</shortName>
        <shortName evidence="6">GPPS small subunit 1</shortName>
    </recommendedName>
    <alternativeName>
        <fullName evidence="7">Geranylgeranyl pyrophosphate reductase GPPSsu 1</fullName>
    </alternativeName>
</protein>
<name>GGR1_CANSA</name>
<sequence length="315" mass="35157">MAVYNLSINCSPRFVHHVYVPHFTCKSNKSLSHVPMRITMSKQHHHSYFASTTADVDAHLKQSITIKPPLSVHEAMYNFIFSTPPNLAPSLCVAACELVGGHQDQAMAAASALRVIHAAIFTHDHLPLTGRPNPTSPEAATHNSYNPNIQLLLPDAIVPFGFELLANSDDLTHNKSDRILRVIVEFTRTFGSRGTIDAQYHEKLASRFDVDSHEAKTVGWGHYPSLKKEGAMHACAAACGAILGEAHEEEVEKLRTFGLYVGMIQGYANRFIMSSTEEKKEADRIIEELTNLARQELKYFDGRNLEPFSTFLFRL</sequence>
<evidence type="ECO:0000250" key="1">
    <source>
        <dbReference type="UniProtKB" id="P14324"/>
    </source>
</evidence>
<evidence type="ECO:0000250" key="2">
    <source>
        <dbReference type="UniProtKB" id="Q12051"/>
    </source>
</evidence>
<evidence type="ECO:0000250" key="3">
    <source>
        <dbReference type="UniProtKB" id="Q39108"/>
    </source>
</evidence>
<evidence type="ECO:0000255" key="4"/>
<evidence type="ECO:0000269" key="5">
    <source>
    </source>
</evidence>
<evidence type="ECO:0000303" key="6">
    <source>
    </source>
</evidence>
<evidence type="ECO:0000303" key="7">
    <source ref="3"/>
</evidence>
<evidence type="ECO:0000305" key="8"/>
<dbReference type="EMBL" id="KY014567">
    <property type="protein sequence ID" value="ARE72263.1"/>
    <property type="status" value="ALT_INIT"/>
    <property type="molecule type" value="mRNA"/>
</dbReference>
<dbReference type="EMBL" id="JAATIP010000220">
    <property type="status" value="NOT_ANNOTATED_CDS"/>
    <property type="molecule type" value="Genomic_DNA"/>
</dbReference>
<dbReference type="EMBL" id="JAATIQ010000048">
    <property type="status" value="NOT_ANNOTATED_CDS"/>
    <property type="molecule type" value="Genomic_DNA"/>
</dbReference>
<dbReference type="EMBL" id="UZAU01000699">
    <property type="status" value="NOT_ANNOTATED_CDS"/>
    <property type="molecule type" value="Genomic_DNA"/>
</dbReference>
<dbReference type="EMBL" id="GHVF01000009">
    <property type="protein sequence ID" value="MBA5282442.1"/>
    <property type="molecule type" value="Transcribed_RNA"/>
</dbReference>
<dbReference type="EMBL" id="GHVG01000009">
    <property type="protein sequence ID" value="MBA5282454.1"/>
    <property type="molecule type" value="Transcribed_RNA"/>
</dbReference>
<dbReference type="SMR" id="A0A1V0QSG9"/>
<dbReference type="OMA" id="ASFTHEC"/>
<dbReference type="Proteomes" id="UP000525078">
    <property type="component" value="Unassembled WGS sequence"/>
</dbReference>
<dbReference type="Proteomes" id="UP000583929">
    <property type="component" value="Unassembled WGS sequence"/>
</dbReference>
<dbReference type="Proteomes" id="UP000596661">
    <property type="component" value="Chromosome 8"/>
</dbReference>
<dbReference type="GO" id="GO:0009535">
    <property type="term" value="C:chloroplast thylakoid membrane"/>
    <property type="evidence" value="ECO:0007669"/>
    <property type="project" value="UniProtKB-SubCell"/>
</dbReference>
<dbReference type="GO" id="GO:0046872">
    <property type="term" value="F:metal ion binding"/>
    <property type="evidence" value="ECO:0007669"/>
    <property type="project" value="UniProtKB-KW"/>
</dbReference>
<dbReference type="GO" id="GO:0004659">
    <property type="term" value="F:prenyltransferase activity"/>
    <property type="evidence" value="ECO:0007669"/>
    <property type="project" value="TreeGrafter"/>
</dbReference>
<dbReference type="Gene3D" id="1.10.600.10">
    <property type="entry name" value="Farnesyl Diphosphate Synthase"/>
    <property type="match status" value="1"/>
</dbReference>
<dbReference type="InterPro" id="IPR008949">
    <property type="entry name" value="Isoprenoid_synthase_dom_sf"/>
</dbReference>
<dbReference type="PANTHER" id="PTHR43281">
    <property type="entry name" value="FARNESYL DIPHOSPHATE SYNTHASE"/>
    <property type="match status" value="1"/>
</dbReference>
<dbReference type="PANTHER" id="PTHR43281:SF6">
    <property type="entry name" value="HETERODIMERIC GERANYLGERANYL PYROPHOSPHATE SYNTHASE SMALL SUBUNIT, CHLOROPLASTIC-LIKE"/>
    <property type="match status" value="1"/>
</dbReference>
<dbReference type="SUPFAM" id="SSF48576">
    <property type="entry name" value="Terpenoid synthases"/>
    <property type="match status" value="1"/>
</dbReference>
<comment type="function">
    <text evidence="3">Heterodimeric geranyl(geranyl)-diphosphate (GPP) synthase small subunit (By similarity). The small subunit alone is inactive in vitro while the large subunit GGPPS1 catalyzes mainly the production of geranygeranyl-diphosphate in vitro (By similarity). Upon association of the two subunits, the product profile changes and the production of gerany-diphosphate is strongly increased (By similarity).</text>
</comment>
<comment type="cofactor">
    <cofactor evidence="2">
        <name>Mg(2+)</name>
        <dbReference type="ChEBI" id="CHEBI:18420"/>
    </cofactor>
    <text evidence="2">Binds 2 Mg(2+) ions per subunit.</text>
</comment>
<comment type="subunit">
    <text evidence="3">Part of a heterodimeric geranyl(geranyl)diphosphate synthase.</text>
</comment>
<comment type="subcellular location">
    <subcellularLocation>
        <location evidence="3">Plastid</location>
        <location evidence="3">Chloroplast thylakoid membrane</location>
        <topology evidence="3">Peripheral membrane protein</topology>
    </subcellularLocation>
    <subcellularLocation>
        <location evidence="4">Plastid</location>
        <location evidence="4">Chloroplast</location>
    </subcellularLocation>
</comment>
<comment type="tissue specificity">
    <text evidence="5">Mainly expressed in trichomes, and, to a lower extent, in roots, leaves, flowers and stems.</text>
</comment>
<comment type="similarity">
    <text evidence="8">Belongs to the FPP/GGPP synthase family.</text>
</comment>
<comment type="sequence caution" evidence="8">
    <conflict type="erroneous initiation">
        <sequence resource="EMBL-CDS" id="ARE72263"/>
    </conflict>
    <text>Extended N-terminus.</text>
</comment>
<feature type="transit peptide" description="Chloroplast" evidence="4">
    <location>
        <begin position="1"/>
        <end status="unknown"/>
    </location>
</feature>
<feature type="chain" id="PRO_0000460887" description="Heterodimeric geranylgeranyl pyrophosphate synthase small subunit 1, chloroplastic">
    <location>
        <begin status="unknown"/>
        <end position="315"/>
    </location>
</feature>
<feature type="binding site" evidence="1">
    <location>
        <position position="124"/>
    </location>
    <ligand>
        <name>Mg(2+)</name>
        <dbReference type="ChEBI" id="CHEBI:18420"/>
        <label>1</label>
    </ligand>
</feature>
<feature type="binding site" evidence="1">
    <location>
        <position position="124"/>
    </location>
    <ligand>
        <name>Mg(2+)</name>
        <dbReference type="ChEBI" id="CHEBI:18420"/>
        <label>2</label>
    </ligand>
</feature>
<feature type="binding site" evidence="1">
    <location>
        <position position="130"/>
    </location>
    <ligand>
        <name>Mg(2+)</name>
        <dbReference type="ChEBI" id="CHEBI:18420"/>
        <label>1</label>
    </ligand>
</feature>
<feature type="binding site" evidence="1">
    <location>
        <position position="130"/>
    </location>
    <ligand>
        <name>Mg(2+)</name>
        <dbReference type="ChEBI" id="CHEBI:18420"/>
        <label>2</label>
    </ligand>
</feature>
<feature type="binding site" evidence="2">
    <location>
        <position position="228"/>
    </location>
    <ligand>
        <name>dimethylallyl diphosphate</name>
        <dbReference type="ChEBI" id="CHEBI:57623"/>
    </ligand>
</feature>
<feature type="binding site" evidence="2">
    <location>
        <position position="265"/>
    </location>
    <ligand>
        <name>dimethylallyl diphosphate</name>
        <dbReference type="ChEBI" id="CHEBI:57623"/>
    </ligand>
</feature>
<feature type="binding site" evidence="2">
    <location>
        <position position="280"/>
    </location>
    <ligand>
        <name>dimethylallyl diphosphate</name>
        <dbReference type="ChEBI" id="CHEBI:57623"/>
    </ligand>
</feature>
<feature type="sequence conflict" description="In Ref. 3; MBA5282442/MBA5282454." evidence="8" ref="3">
    <original>V</original>
    <variation>VY</variation>
    <location>
        <position position="3"/>
    </location>
</feature>
<feature type="sequence conflict" description="In Ref. 3; MBA5282442/MBA5282454." evidence="8" ref="3">
    <original>S</original>
    <variation>C</variation>
    <location>
        <position position="32"/>
    </location>
</feature>
<feature type="sequence conflict" description="In Ref. 3; MBA5282442/MBA5282454." evidence="8" ref="3">
    <original>A</original>
    <variation>T</variation>
    <location>
        <position position="75"/>
    </location>
</feature>
<feature type="sequence conflict" description="In Ref. 3; MBA5282442/MBA5282454." evidence="8" ref="3">
    <original>D</original>
    <variation>E</variation>
    <location>
        <position position="177"/>
    </location>
</feature>
<proteinExistence type="evidence at transcript level"/>
<organism>
    <name type="scientific">Cannabis sativa</name>
    <name type="common">Hemp</name>
    <name type="synonym">Marijuana</name>
    <dbReference type="NCBI Taxonomy" id="3483"/>
    <lineage>
        <taxon>Eukaryota</taxon>
        <taxon>Viridiplantae</taxon>
        <taxon>Streptophyta</taxon>
        <taxon>Embryophyta</taxon>
        <taxon>Tracheophyta</taxon>
        <taxon>Spermatophyta</taxon>
        <taxon>Magnoliopsida</taxon>
        <taxon>eudicotyledons</taxon>
        <taxon>Gunneridae</taxon>
        <taxon>Pentapetalae</taxon>
        <taxon>rosids</taxon>
        <taxon>fabids</taxon>
        <taxon>Rosales</taxon>
        <taxon>Cannabaceae</taxon>
        <taxon>Cannabis</taxon>
    </lineage>
</organism>